<name>Y5901_STRCO</name>
<reference key="1">
    <citation type="journal article" date="2002" name="Nature">
        <title>Complete genome sequence of the model actinomycete Streptomyces coelicolor A3(2).</title>
        <authorList>
            <person name="Bentley S.D."/>
            <person name="Chater K.F."/>
            <person name="Cerdeno-Tarraga A.-M."/>
            <person name="Challis G.L."/>
            <person name="Thomson N.R."/>
            <person name="James K.D."/>
            <person name="Harris D.E."/>
            <person name="Quail M.A."/>
            <person name="Kieser H."/>
            <person name="Harper D."/>
            <person name="Bateman A."/>
            <person name="Brown S."/>
            <person name="Chandra G."/>
            <person name="Chen C.W."/>
            <person name="Collins M."/>
            <person name="Cronin A."/>
            <person name="Fraser A."/>
            <person name="Goble A."/>
            <person name="Hidalgo J."/>
            <person name="Hornsby T."/>
            <person name="Howarth S."/>
            <person name="Huang C.-H."/>
            <person name="Kieser T."/>
            <person name="Larke L."/>
            <person name="Murphy L.D."/>
            <person name="Oliver K."/>
            <person name="O'Neil S."/>
            <person name="Rabbinowitsch E."/>
            <person name="Rajandream M.A."/>
            <person name="Rutherford K.M."/>
            <person name="Rutter S."/>
            <person name="Seeger K."/>
            <person name="Saunders D."/>
            <person name="Sharp S."/>
            <person name="Squares R."/>
            <person name="Squares S."/>
            <person name="Taylor K."/>
            <person name="Warren T."/>
            <person name="Wietzorrek A."/>
            <person name="Woodward J.R."/>
            <person name="Barrell B.G."/>
            <person name="Parkhill J."/>
            <person name="Hopwood D.A."/>
        </authorList>
    </citation>
    <scope>NUCLEOTIDE SEQUENCE [LARGE SCALE GENOMIC DNA]</scope>
    <source>
        <strain>ATCC BAA-471 / A3(2) / M145</strain>
    </source>
</reference>
<proteinExistence type="inferred from homology"/>
<gene>
    <name type="ordered locus">SCO5901</name>
    <name type="ORF">SC10A5.06</name>
</gene>
<protein>
    <recommendedName>
        <fullName>Uncharacterized RNA methyltransferase SCO5901</fullName>
        <ecNumber>2.1.1.-</ecNumber>
    </recommendedName>
</protein>
<accession>O54099</accession>
<sequence>MQAEPKKSQAEQRAVAEPVSEPVSLVGEEYEVEVGPVAHGGHCIARTSEGQVLFVRHTLPGERVVARVTEGEEGARFLRADAVEILDPSKDRIEAPCPFAGPGRCGGCDWQHAKPGAQRRLKGEVVAEQLQRLAGLTPEEAGWDGTVMPAEGDKLPAGQVPSWRTRVQFAVDADGRAGLRRHRSHEIEPIDHCMIAAEGVSELGIERRDWPGMATVEAIAATGSQDRQVILTPRPGARLPIVELDRPVSVMRVGEKDGGVHRVHGRPFVRERADDRTYRVGSGGFWQVHPKAADTLVTAVMQGLLPRKGDMALDLYCGVGLFAGALADRVGDQGAVLGIESGKRAVEDARHNLAAFDRVRIEQGKVESVLPRTGIDEVDLIVLDPPRAGAGRKTVQHLSTLGARRIAYVACDPAALARDLGYFQDGGYRVRTLRVFDLFPMTAHVECVAILEPAAKGL</sequence>
<keyword id="KW-0004">4Fe-4S</keyword>
<keyword id="KW-0408">Iron</keyword>
<keyword id="KW-0411">Iron-sulfur</keyword>
<keyword id="KW-0479">Metal-binding</keyword>
<keyword id="KW-0489">Methyltransferase</keyword>
<keyword id="KW-1185">Reference proteome</keyword>
<keyword id="KW-0949">S-adenosyl-L-methionine</keyword>
<keyword id="KW-0808">Transferase</keyword>
<organism>
    <name type="scientific">Streptomyces coelicolor (strain ATCC BAA-471 / A3(2) / M145)</name>
    <dbReference type="NCBI Taxonomy" id="100226"/>
    <lineage>
        <taxon>Bacteria</taxon>
        <taxon>Bacillati</taxon>
        <taxon>Actinomycetota</taxon>
        <taxon>Actinomycetes</taxon>
        <taxon>Kitasatosporales</taxon>
        <taxon>Streptomycetaceae</taxon>
        <taxon>Streptomyces</taxon>
        <taxon>Streptomyces albidoflavus group</taxon>
    </lineage>
</organism>
<evidence type="ECO:0000250" key="1"/>
<evidence type="ECO:0000255" key="2">
    <source>
        <dbReference type="PROSITE-ProRule" id="PRU00208"/>
    </source>
</evidence>
<evidence type="ECO:0000255" key="3">
    <source>
        <dbReference type="PROSITE-ProRule" id="PRU01024"/>
    </source>
</evidence>
<evidence type="ECO:0000256" key="4">
    <source>
        <dbReference type="SAM" id="MobiDB-lite"/>
    </source>
</evidence>
<comment type="similarity">
    <text evidence="3">Belongs to the class I-like SAM-binding methyltransferase superfamily. RNA M5U methyltransferase family.</text>
</comment>
<feature type="chain" id="PRO_0000162028" description="Uncharacterized RNA methyltransferase SCO5901">
    <location>
        <begin position="1"/>
        <end position="458"/>
    </location>
</feature>
<feature type="domain" description="TRAM" evidence="2">
    <location>
        <begin position="23"/>
        <end position="84"/>
    </location>
</feature>
<feature type="region of interest" description="Disordered" evidence="4">
    <location>
        <begin position="1"/>
        <end position="20"/>
    </location>
</feature>
<feature type="compositionally biased region" description="Basic and acidic residues" evidence="4">
    <location>
        <begin position="1"/>
        <end position="10"/>
    </location>
</feature>
<feature type="active site" description="Nucleophile" evidence="3">
    <location>
        <position position="411"/>
    </location>
</feature>
<feature type="binding site" evidence="1">
    <location>
        <position position="97"/>
    </location>
    <ligand>
        <name>[4Fe-4S] cluster</name>
        <dbReference type="ChEBI" id="CHEBI:49883"/>
    </ligand>
</feature>
<feature type="binding site" evidence="1">
    <location>
        <position position="105"/>
    </location>
    <ligand>
        <name>[4Fe-4S] cluster</name>
        <dbReference type="ChEBI" id="CHEBI:49883"/>
    </ligand>
</feature>
<feature type="binding site" evidence="1">
    <location>
        <position position="108"/>
    </location>
    <ligand>
        <name>[4Fe-4S] cluster</name>
        <dbReference type="ChEBI" id="CHEBI:49883"/>
    </ligand>
</feature>
<feature type="binding site" evidence="1">
    <location>
        <position position="193"/>
    </location>
    <ligand>
        <name>[4Fe-4S] cluster</name>
        <dbReference type="ChEBI" id="CHEBI:49883"/>
    </ligand>
</feature>
<feature type="binding site" evidence="3">
    <location>
        <position position="287"/>
    </location>
    <ligand>
        <name>S-adenosyl-L-methionine</name>
        <dbReference type="ChEBI" id="CHEBI:59789"/>
    </ligand>
</feature>
<feature type="binding site" evidence="3">
    <location>
        <position position="316"/>
    </location>
    <ligand>
        <name>S-adenosyl-L-methionine</name>
        <dbReference type="ChEBI" id="CHEBI:59789"/>
    </ligand>
</feature>
<feature type="binding site" evidence="3">
    <location>
        <position position="340"/>
    </location>
    <ligand>
        <name>S-adenosyl-L-methionine</name>
        <dbReference type="ChEBI" id="CHEBI:59789"/>
    </ligand>
</feature>
<feature type="binding site" evidence="3">
    <location>
        <position position="384"/>
    </location>
    <ligand>
        <name>S-adenosyl-L-methionine</name>
        <dbReference type="ChEBI" id="CHEBI:59789"/>
    </ligand>
</feature>
<dbReference type="EC" id="2.1.1.-"/>
<dbReference type="EMBL" id="AL939125">
    <property type="protein sequence ID" value="CAA16438.1"/>
    <property type="molecule type" value="Genomic_DNA"/>
</dbReference>
<dbReference type="PIR" id="T34574">
    <property type="entry name" value="T34574"/>
</dbReference>
<dbReference type="RefSeq" id="NP_630021.1">
    <property type="nucleotide sequence ID" value="NC_003888.3"/>
</dbReference>
<dbReference type="RefSeq" id="WP_011030522.1">
    <property type="nucleotide sequence ID" value="NZ_VNID01000007.1"/>
</dbReference>
<dbReference type="SMR" id="O54099"/>
<dbReference type="FunCoup" id="O54099">
    <property type="interactions" value="155"/>
</dbReference>
<dbReference type="STRING" id="100226.gene:17763561"/>
<dbReference type="PaxDb" id="100226-SCO5901"/>
<dbReference type="KEGG" id="sco:SCO5901"/>
<dbReference type="PATRIC" id="fig|100226.15.peg.6001"/>
<dbReference type="eggNOG" id="COG2265">
    <property type="taxonomic scope" value="Bacteria"/>
</dbReference>
<dbReference type="HOGENOM" id="CLU_014689_7_0_11"/>
<dbReference type="InParanoid" id="O54099"/>
<dbReference type="OrthoDB" id="9804590at2"/>
<dbReference type="PhylomeDB" id="O54099"/>
<dbReference type="Proteomes" id="UP000001973">
    <property type="component" value="Chromosome"/>
</dbReference>
<dbReference type="GO" id="GO:0051539">
    <property type="term" value="F:4 iron, 4 sulfur cluster binding"/>
    <property type="evidence" value="ECO:0007669"/>
    <property type="project" value="UniProtKB-KW"/>
</dbReference>
<dbReference type="GO" id="GO:0046872">
    <property type="term" value="F:metal ion binding"/>
    <property type="evidence" value="ECO:0007669"/>
    <property type="project" value="UniProtKB-KW"/>
</dbReference>
<dbReference type="GO" id="GO:0070041">
    <property type="term" value="F:rRNA (uridine-C5-)-methyltransferase activity"/>
    <property type="evidence" value="ECO:0000318"/>
    <property type="project" value="GO_Central"/>
</dbReference>
<dbReference type="GO" id="GO:0070475">
    <property type="term" value="P:rRNA base methylation"/>
    <property type="evidence" value="ECO:0000318"/>
    <property type="project" value="GO_Central"/>
</dbReference>
<dbReference type="CDD" id="cd02440">
    <property type="entry name" value="AdoMet_MTases"/>
    <property type="match status" value="1"/>
</dbReference>
<dbReference type="FunFam" id="3.40.50.150:FF:000009">
    <property type="entry name" value="23S rRNA (Uracil(1939)-C(5))-methyltransferase RlmD"/>
    <property type="match status" value="1"/>
</dbReference>
<dbReference type="FunFam" id="2.40.50.1070:FF:000009">
    <property type="entry name" value="23S rRNA m(5)U-1939 methyltransferase"/>
    <property type="match status" value="1"/>
</dbReference>
<dbReference type="Gene3D" id="2.40.50.1070">
    <property type="match status" value="1"/>
</dbReference>
<dbReference type="Gene3D" id="2.40.50.140">
    <property type="entry name" value="Nucleic acid-binding proteins"/>
    <property type="match status" value="1"/>
</dbReference>
<dbReference type="Gene3D" id="3.40.50.150">
    <property type="entry name" value="Vaccinia Virus protein VP39"/>
    <property type="match status" value="1"/>
</dbReference>
<dbReference type="InterPro" id="IPR030391">
    <property type="entry name" value="MeTrfase_TrmA_CS"/>
</dbReference>
<dbReference type="InterPro" id="IPR012340">
    <property type="entry name" value="NA-bd_OB-fold"/>
</dbReference>
<dbReference type="InterPro" id="IPR029063">
    <property type="entry name" value="SAM-dependent_MTases_sf"/>
</dbReference>
<dbReference type="InterPro" id="IPR002792">
    <property type="entry name" value="TRAM_dom"/>
</dbReference>
<dbReference type="InterPro" id="IPR010280">
    <property type="entry name" value="U5_MeTrfase_fam"/>
</dbReference>
<dbReference type="PANTHER" id="PTHR11061">
    <property type="entry name" value="RNA M5U METHYLTRANSFERASE"/>
    <property type="match status" value="1"/>
</dbReference>
<dbReference type="PANTHER" id="PTHR11061:SF30">
    <property type="entry name" value="TRNA (URACIL(54)-C(5))-METHYLTRANSFERASE"/>
    <property type="match status" value="1"/>
</dbReference>
<dbReference type="Pfam" id="PF01938">
    <property type="entry name" value="TRAM"/>
    <property type="match status" value="1"/>
</dbReference>
<dbReference type="Pfam" id="PF05958">
    <property type="entry name" value="tRNA_U5-meth_tr"/>
    <property type="match status" value="1"/>
</dbReference>
<dbReference type="SUPFAM" id="SSF50249">
    <property type="entry name" value="Nucleic acid-binding proteins"/>
    <property type="match status" value="1"/>
</dbReference>
<dbReference type="SUPFAM" id="SSF53335">
    <property type="entry name" value="S-adenosyl-L-methionine-dependent methyltransferases"/>
    <property type="match status" value="1"/>
</dbReference>
<dbReference type="PROSITE" id="PS51687">
    <property type="entry name" value="SAM_MT_RNA_M5U"/>
    <property type="match status" value="1"/>
</dbReference>
<dbReference type="PROSITE" id="PS50926">
    <property type="entry name" value="TRAM"/>
    <property type="match status" value="1"/>
</dbReference>
<dbReference type="PROSITE" id="PS01231">
    <property type="entry name" value="TRMA_2"/>
    <property type="match status" value="1"/>
</dbReference>